<gene>
    <name type="primary">yqfC</name>
    <name type="ordered locus">BSU25360</name>
</gene>
<feature type="chain" id="PRO_0000049795" description="Uncharacterized protein YqfC">
    <location>
        <begin position="1"/>
        <end position="93"/>
    </location>
</feature>
<dbReference type="EMBL" id="D84432">
    <property type="protein sequence ID" value="BAA12475.1"/>
    <property type="molecule type" value="Genomic_DNA"/>
</dbReference>
<dbReference type="EMBL" id="AL009126">
    <property type="protein sequence ID" value="CAB14478.1"/>
    <property type="molecule type" value="Genomic_DNA"/>
</dbReference>
<dbReference type="PIR" id="C69953">
    <property type="entry name" value="C69953"/>
</dbReference>
<dbReference type="RefSeq" id="NP_390414.1">
    <property type="nucleotide sequence ID" value="NC_000964.3"/>
</dbReference>
<dbReference type="RefSeq" id="WP_003226191.1">
    <property type="nucleotide sequence ID" value="NZ_OZ025638.1"/>
</dbReference>
<dbReference type="SMR" id="P54468"/>
<dbReference type="FunCoup" id="P54468">
    <property type="interactions" value="82"/>
</dbReference>
<dbReference type="STRING" id="224308.BSU25360"/>
<dbReference type="PaxDb" id="224308-BSU25360"/>
<dbReference type="EnsemblBacteria" id="CAB14478">
    <property type="protein sequence ID" value="CAB14478"/>
    <property type="gene ID" value="BSU_25360"/>
</dbReference>
<dbReference type="GeneID" id="11240204"/>
<dbReference type="GeneID" id="937870"/>
<dbReference type="KEGG" id="bsu:BSU25360"/>
<dbReference type="PATRIC" id="fig|224308.179.peg.2757"/>
<dbReference type="eggNOG" id="ENOG5032ZA5">
    <property type="taxonomic scope" value="Bacteria"/>
</dbReference>
<dbReference type="InParanoid" id="P54468"/>
<dbReference type="OrthoDB" id="2989236at2"/>
<dbReference type="BioCyc" id="BSUB:BSU25360-MONOMER"/>
<dbReference type="PRO" id="PR:P54468"/>
<dbReference type="Proteomes" id="UP000001570">
    <property type="component" value="Chromosome"/>
</dbReference>
<dbReference type="InterPro" id="IPR022476">
    <property type="entry name" value="Spore_YabP/YqfC"/>
</dbReference>
<dbReference type="InterPro" id="IPR022477">
    <property type="entry name" value="Spore_YqfC"/>
</dbReference>
<dbReference type="NCBIfam" id="TIGR02856">
    <property type="entry name" value="spore_yqfC"/>
    <property type="match status" value="1"/>
</dbReference>
<dbReference type="Pfam" id="PF07873">
    <property type="entry name" value="YabP"/>
    <property type="match status" value="1"/>
</dbReference>
<organism>
    <name type="scientific">Bacillus subtilis (strain 168)</name>
    <dbReference type="NCBI Taxonomy" id="224308"/>
    <lineage>
        <taxon>Bacteria</taxon>
        <taxon>Bacillati</taxon>
        <taxon>Bacillota</taxon>
        <taxon>Bacilli</taxon>
        <taxon>Bacillales</taxon>
        <taxon>Bacillaceae</taxon>
        <taxon>Bacillus</taxon>
    </lineage>
</organism>
<keyword id="KW-1185">Reference proteome</keyword>
<accession>P54468</accession>
<sequence length="93" mass="10791">MGQRKNRMKAWLTRALEIPPDVMMDLPRITMVGRLHIYIENHRGLLLFSENEVRLMLKQGQCIISGKNFVIKAILPEEILLEGTIDVVRYVES</sequence>
<name>YQFC_BACSU</name>
<reference key="1">
    <citation type="journal article" date="1996" name="Microbiology">
        <title>Systematic sequencing of the 283 kb 210 degrees-232 degrees region of the Bacillus subtilis genome containing the skin element and many sporulation genes.</title>
        <authorList>
            <person name="Mizuno M."/>
            <person name="Masuda S."/>
            <person name="Takemaru K."/>
            <person name="Hosono S."/>
            <person name="Sato T."/>
            <person name="Takeuchi M."/>
            <person name="Kobayashi Y."/>
        </authorList>
    </citation>
    <scope>NUCLEOTIDE SEQUENCE [GENOMIC DNA]</scope>
    <source>
        <strain>168 / JH642</strain>
    </source>
</reference>
<reference key="2">
    <citation type="journal article" date="1997" name="Nature">
        <title>The complete genome sequence of the Gram-positive bacterium Bacillus subtilis.</title>
        <authorList>
            <person name="Kunst F."/>
            <person name="Ogasawara N."/>
            <person name="Moszer I."/>
            <person name="Albertini A.M."/>
            <person name="Alloni G."/>
            <person name="Azevedo V."/>
            <person name="Bertero M.G."/>
            <person name="Bessieres P."/>
            <person name="Bolotin A."/>
            <person name="Borchert S."/>
            <person name="Borriss R."/>
            <person name="Boursier L."/>
            <person name="Brans A."/>
            <person name="Braun M."/>
            <person name="Brignell S.C."/>
            <person name="Bron S."/>
            <person name="Brouillet S."/>
            <person name="Bruschi C.V."/>
            <person name="Caldwell B."/>
            <person name="Capuano V."/>
            <person name="Carter N.M."/>
            <person name="Choi S.-K."/>
            <person name="Codani J.-J."/>
            <person name="Connerton I.F."/>
            <person name="Cummings N.J."/>
            <person name="Daniel R.A."/>
            <person name="Denizot F."/>
            <person name="Devine K.M."/>
            <person name="Duesterhoeft A."/>
            <person name="Ehrlich S.D."/>
            <person name="Emmerson P.T."/>
            <person name="Entian K.-D."/>
            <person name="Errington J."/>
            <person name="Fabret C."/>
            <person name="Ferrari E."/>
            <person name="Foulger D."/>
            <person name="Fritz C."/>
            <person name="Fujita M."/>
            <person name="Fujita Y."/>
            <person name="Fuma S."/>
            <person name="Galizzi A."/>
            <person name="Galleron N."/>
            <person name="Ghim S.-Y."/>
            <person name="Glaser P."/>
            <person name="Goffeau A."/>
            <person name="Golightly E.J."/>
            <person name="Grandi G."/>
            <person name="Guiseppi G."/>
            <person name="Guy B.J."/>
            <person name="Haga K."/>
            <person name="Haiech J."/>
            <person name="Harwood C.R."/>
            <person name="Henaut A."/>
            <person name="Hilbert H."/>
            <person name="Holsappel S."/>
            <person name="Hosono S."/>
            <person name="Hullo M.-F."/>
            <person name="Itaya M."/>
            <person name="Jones L.-M."/>
            <person name="Joris B."/>
            <person name="Karamata D."/>
            <person name="Kasahara Y."/>
            <person name="Klaerr-Blanchard M."/>
            <person name="Klein C."/>
            <person name="Kobayashi Y."/>
            <person name="Koetter P."/>
            <person name="Koningstein G."/>
            <person name="Krogh S."/>
            <person name="Kumano M."/>
            <person name="Kurita K."/>
            <person name="Lapidus A."/>
            <person name="Lardinois S."/>
            <person name="Lauber J."/>
            <person name="Lazarevic V."/>
            <person name="Lee S.-M."/>
            <person name="Levine A."/>
            <person name="Liu H."/>
            <person name="Masuda S."/>
            <person name="Mauel C."/>
            <person name="Medigue C."/>
            <person name="Medina N."/>
            <person name="Mellado R.P."/>
            <person name="Mizuno M."/>
            <person name="Moestl D."/>
            <person name="Nakai S."/>
            <person name="Noback M."/>
            <person name="Noone D."/>
            <person name="O'Reilly M."/>
            <person name="Ogawa K."/>
            <person name="Ogiwara A."/>
            <person name="Oudega B."/>
            <person name="Park S.-H."/>
            <person name="Parro V."/>
            <person name="Pohl T.M."/>
            <person name="Portetelle D."/>
            <person name="Porwollik S."/>
            <person name="Prescott A.M."/>
            <person name="Presecan E."/>
            <person name="Pujic P."/>
            <person name="Purnelle B."/>
            <person name="Rapoport G."/>
            <person name="Rey M."/>
            <person name="Reynolds S."/>
            <person name="Rieger M."/>
            <person name="Rivolta C."/>
            <person name="Rocha E."/>
            <person name="Roche B."/>
            <person name="Rose M."/>
            <person name="Sadaie Y."/>
            <person name="Sato T."/>
            <person name="Scanlan E."/>
            <person name="Schleich S."/>
            <person name="Schroeter R."/>
            <person name="Scoffone F."/>
            <person name="Sekiguchi J."/>
            <person name="Sekowska A."/>
            <person name="Seror S.J."/>
            <person name="Serror P."/>
            <person name="Shin B.-S."/>
            <person name="Soldo B."/>
            <person name="Sorokin A."/>
            <person name="Tacconi E."/>
            <person name="Takagi T."/>
            <person name="Takahashi H."/>
            <person name="Takemaru K."/>
            <person name="Takeuchi M."/>
            <person name="Tamakoshi A."/>
            <person name="Tanaka T."/>
            <person name="Terpstra P."/>
            <person name="Tognoni A."/>
            <person name="Tosato V."/>
            <person name="Uchiyama S."/>
            <person name="Vandenbol M."/>
            <person name="Vannier F."/>
            <person name="Vassarotti A."/>
            <person name="Viari A."/>
            <person name="Wambutt R."/>
            <person name="Wedler E."/>
            <person name="Wedler H."/>
            <person name="Weitzenegger T."/>
            <person name="Winters P."/>
            <person name="Wipat A."/>
            <person name="Yamamoto H."/>
            <person name="Yamane K."/>
            <person name="Yasumoto K."/>
            <person name="Yata K."/>
            <person name="Yoshida K."/>
            <person name="Yoshikawa H.-F."/>
            <person name="Zumstein E."/>
            <person name="Yoshikawa H."/>
            <person name="Danchin A."/>
        </authorList>
    </citation>
    <scope>NUCLEOTIDE SEQUENCE [LARGE SCALE GENOMIC DNA]</scope>
    <source>
        <strain>168</strain>
    </source>
</reference>
<protein>
    <recommendedName>
        <fullName>Uncharacterized protein YqfC</fullName>
    </recommendedName>
</protein>
<proteinExistence type="predicted"/>